<protein>
    <recommendedName>
        <fullName evidence="1">Probable glycine dehydrogenase (decarboxylating) subunit 2</fullName>
        <ecNumber evidence="1">1.4.4.2</ecNumber>
    </recommendedName>
    <alternativeName>
        <fullName evidence="1">Glycine cleavage system P-protein subunit 2</fullName>
    </alternativeName>
    <alternativeName>
        <fullName evidence="1">Glycine decarboxylase subunit 2</fullName>
    </alternativeName>
    <alternativeName>
        <fullName evidence="1">Glycine dehydrogenase (aminomethyl-transferring) subunit 2</fullName>
    </alternativeName>
</protein>
<proteinExistence type="inferred from homology"/>
<evidence type="ECO:0000255" key="1">
    <source>
        <dbReference type="HAMAP-Rule" id="MF_00713"/>
    </source>
</evidence>
<keyword id="KW-0560">Oxidoreductase</keyword>
<keyword id="KW-0663">Pyridoxal phosphate</keyword>
<keyword id="KW-1185">Reference proteome</keyword>
<sequence>MFHQAKWDEPTIFELSRPGRIGYTLPKPIEDVDVDIPEKLRRKSPLNLPELSEPEVVKHYTRLSEMNYGVDSGIYPLGSCTMKYNPKINEEIASHPGVAYVHPYQDEGTVQGALKIMWELEQWLKEITGMDRFTLQPAAGANGEFTGVSIIRAYHIDRGETQRTEMLVPDSAHGTNPASAAMAGFKVIEIPSNENGTVDLEALENAVSERTAGLMLTNPNTLGIFEDEILEIAKIVHKAGGLLYYDGANLNAVLGKIRPGDMGFDVVHLNLHKTFSTPHGGGGPGSGPVGVKDFLKDYLPVPLVSYDAENDRYYLDYNVPRSIGKVKELYGNFAVIVRALTYLKIMGREGLKEVSEVAVLNANYLTQKLKGTRGYELPGKELRKHETVFSAEPMKKETGVKALDVAKRLLDFCMHAPTIYFPLIVHEALMIEPTETVSKEELDAYVEALKRISEEAYSNPEVVTSAPHNTAVRRVDDVLAAKKPVITWRMYRELKERGEIDY</sequence>
<organism>
    <name type="scientific">Thermococcus kodakarensis (strain ATCC BAA-918 / JCM 12380 / KOD1)</name>
    <name type="common">Pyrococcus kodakaraensis (strain KOD1)</name>
    <dbReference type="NCBI Taxonomy" id="69014"/>
    <lineage>
        <taxon>Archaea</taxon>
        <taxon>Methanobacteriati</taxon>
        <taxon>Methanobacteriota</taxon>
        <taxon>Thermococci</taxon>
        <taxon>Thermococcales</taxon>
        <taxon>Thermococcaceae</taxon>
        <taxon>Thermococcus</taxon>
    </lineage>
</organism>
<reference key="1">
    <citation type="journal article" date="2005" name="Genome Res.">
        <title>Complete genome sequence of the hyperthermophilic archaeon Thermococcus kodakaraensis KOD1 and comparison with Pyrococcus genomes.</title>
        <authorList>
            <person name="Fukui T."/>
            <person name="Atomi H."/>
            <person name="Kanai T."/>
            <person name="Matsumi R."/>
            <person name="Fujiwara S."/>
            <person name="Imanaka T."/>
        </authorList>
    </citation>
    <scope>NUCLEOTIDE SEQUENCE [LARGE SCALE GENOMIC DNA]</scope>
    <source>
        <strain>ATCC BAA-918 / JCM 12380 / KOD1</strain>
    </source>
</reference>
<comment type="function">
    <text evidence="1">The glycine cleavage system catalyzes the degradation of glycine. The P protein binds the alpha-amino group of glycine through its pyridoxal phosphate cofactor; CO(2) is released and the remaining methylamine moiety is then transferred to the lipoamide cofactor of the H protein.</text>
</comment>
<comment type="catalytic activity">
    <reaction evidence="1">
        <text>N(6)-[(R)-lipoyl]-L-lysyl-[glycine-cleavage complex H protein] + glycine + H(+) = N(6)-[(R)-S(8)-aminomethyldihydrolipoyl]-L-lysyl-[glycine-cleavage complex H protein] + CO2</text>
        <dbReference type="Rhea" id="RHEA:24304"/>
        <dbReference type="Rhea" id="RHEA-COMP:10494"/>
        <dbReference type="Rhea" id="RHEA-COMP:10495"/>
        <dbReference type="ChEBI" id="CHEBI:15378"/>
        <dbReference type="ChEBI" id="CHEBI:16526"/>
        <dbReference type="ChEBI" id="CHEBI:57305"/>
        <dbReference type="ChEBI" id="CHEBI:83099"/>
        <dbReference type="ChEBI" id="CHEBI:83143"/>
        <dbReference type="EC" id="1.4.4.2"/>
    </reaction>
</comment>
<comment type="cofactor">
    <cofactor evidence="1">
        <name>pyridoxal 5'-phosphate</name>
        <dbReference type="ChEBI" id="CHEBI:597326"/>
    </cofactor>
</comment>
<comment type="subunit">
    <text evidence="1">The glycine cleavage system is composed of four proteins: P, T, L and H. In this organism, the P 'protein' is a heterodimer of two subunits.</text>
</comment>
<comment type="similarity">
    <text evidence="1">Belongs to the GcvP family. C-terminal subunit subfamily.</text>
</comment>
<feature type="chain" id="PRO_0000167030" description="Probable glycine dehydrogenase (decarboxylating) subunit 2">
    <location>
        <begin position="1"/>
        <end position="502"/>
    </location>
</feature>
<feature type="modified residue" description="N6-(pyridoxal phosphate)lysine" evidence="1">
    <location>
        <position position="273"/>
    </location>
</feature>
<accession>Q5JGX6</accession>
<gene>
    <name evidence="1" type="primary">gcvPB</name>
    <name type="ordered locus">TK1379</name>
</gene>
<dbReference type="EC" id="1.4.4.2" evidence="1"/>
<dbReference type="EMBL" id="AP006878">
    <property type="protein sequence ID" value="BAD85568.1"/>
    <property type="molecule type" value="Genomic_DNA"/>
</dbReference>
<dbReference type="RefSeq" id="WP_011250330.1">
    <property type="nucleotide sequence ID" value="NC_006624.1"/>
</dbReference>
<dbReference type="SMR" id="Q5JGX6"/>
<dbReference type="IntAct" id="Q5JGX6">
    <property type="interactions" value="1"/>
</dbReference>
<dbReference type="MINT" id="Q5JGX6"/>
<dbReference type="STRING" id="69014.TK1379"/>
<dbReference type="EnsemblBacteria" id="BAD85568">
    <property type="protein sequence ID" value="BAD85568"/>
    <property type="gene ID" value="TK1379"/>
</dbReference>
<dbReference type="GeneID" id="78447899"/>
<dbReference type="KEGG" id="tko:TK1379"/>
<dbReference type="PATRIC" id="fig|69014.16.peg.1341"/>
<dbReference type="eggNOG" id="arCOG00076">
    <property type="taxonomic scope" value="Archaea"/>
</dbReference>
<dbReference type="HOGENOM" id="CLU_004620_5_0_2"/>
<dbReference type="InParanoid" id="Q5JGX6"/>
<dbReference type="OrthoDB" id="371967at2157"/>
<dbReference type="PhylomeDB" id="Q5JGX6"/>
<dbReference type="Proteomes" id="UP000000536">
    <property type="component" value="Chromosome"/>
</dbReference>
<dbReference type="GO" id="GO:0005829">
    <property type="term" value="C:cytosol"/>
    <property type="evidence" value="ECO:0000318"/>
    <property type="project" value="GO_Central"/>
</dbReference>
<dbReference type="GO" id="GO:0005960">
    <property type="term" value="C:glycine cleavage complex"/>
    <property type="evidence" value="ECO:0000318"/>
    <property type="project" value="GO_Central"/>
</dbReference>
<dbReference type="GO" id="GO:0016594">
    <property type="term" value="F:glycine binding"/>
    <property type="evidence" value="ECO:0000318"/>
    <property type="project" value="GO_Central"/>
</dbReference>
<dbReference type="GO" id="GO:0004375">
    <property type="term" value="F:glycine dehydrogenase (decarboxylating) activity"/>
    <property type="evidence" value="ECO:0000318"/>
    <property type="project" value="GO_Central"/>
</dbReference>
<dbReference type="GO" id="GO:0030170">
    <property type="term" value="F:pyridoxal phosphate binding"/>
    <property type="evidence" value="ECO:0000318"/>
    <property type="project" value="GO_Central"/>
</dbReference>
<dbReference type="GO" id="GO:0019464">
    <property type="term" value="P:glycine decarboxylation via glycine cleavage system"/>
    <property type="evidence" value="ECO:0000318"/>
    <property type="project" value="GO_Central"/>
</dbReference>
<dbReference type="CDD" id="cd00613">
    <property type="entry name" value="GDC-P"/>
    <property type="match status" value="1"/>
</dbReference>
<dbReference type="FunFam" id="3.40.640.10:FF:000034">
    <property type="entry name" value="Probable glycine dehydrogenase (decarboxylating) subunit 2"/>
    <property type="match status" value="1"/>
</dbReference>
<dbReference type="FunFam" id="3.90.1150.10:FF:000014">
    <property type="entry name" value="Probable glycine dehydrogenase (decarboxylating) subunit 2"/>
    <property type="match status" value="1"/>
</dbReference>
<dbReference type="Gene3D" id="6.20.440.10">
    <property type="match status" value="1"/>
</dbReference>
<dbReference type="Gene3D" id="3.90.1150.10">
    <property type="entry name" value="Aspartate Aminotransferase, domain 1"/>
    <property type="match status" value="1"/>
</dbReference>
<dbReference type="Gene3D" id="3.40.640.10">
    <property type="entry name" value="Type I PLP-dependent aspartate aminotransferase-like (Major domain)"/>
    <property type="match status" value="1"/>
</dbReference>
<dbReference type="HAMAP" id="MF_00713">
    <property type="entry name" value="GcvPB"/>
    <property type="match status" value="1"/>
</dbReference>
<dbReference type="InterPro" id="IPR023012">
    <property type="entry name" value="GcvPB"/>
</dbReference>
<dbReference type="InterPro" id="IPR049316">
    <property type="entry name" value="GDC-P_C"/>
</dbReference>
<dbReference type="InterPro" id="IPR049315">
    <property type="entry name" value="GDC-P_N"/>
</dbReference>
<dbReference type="InterPro" id="IPR020581">
    <property type="entry name" value="GDC_P"/>
</dbReference>
<dbReference type="InterPro" id="IPR015424">
    <property type="entry name" value="PyrdxlP-dep_Trfase"/>
</dbReference>
<dbReference type="InterPro" id="IPR015421">
    <property type="entry name" value="PyrdxlP-dep_Trfase_major"/>
</dbReference>
<dbReference type="InterPro" id="IPR015422">
    <property type="entry name" value="PyrdxlP-dep_Trfase_small"/>
</dbReference>
<dbReference type="NCBIfam" id="NF003346">
    <property type="entry name" value="PRK04366.1"/>
    <property type="match status" value="1"/>
</dbReference>
<dbReference type="PANTHER" id="PTHR11773:SF1">
    <property type="entry name" value="GLYCINE DEHYDROGENASE (DECARBOXYLATING), MITOCHONDRIAL"/>
    <property type="match status" value="1"/>
</dbReference>
<dbReference type="PANTHER" id="PTHR11773">
    <property type="entry name" value="GLYCINE DEHYDROGENASE, DECARBOXYLATING"/>
    <property type="match status" value="1"/>
</dbReference>
<dbReference type="Pfam" id="PF21478">
    <property type="entry name" value="GcvP2_C"/>
    <property type="match status" value="1"/>
</dbReference>
<dbReference type="Pfam" id="PF02347">
    <property type="entry name" value="GDC-P"/>
    <property type="match status" value="1"/>
</dbReference>
<dbReference type="SUPFAM" id="SSF53383">
    <property type="entry name" value="PLP-dependent transferases"/>
    <property type="match status" value="1"/>
</dbReference>
<name>GCSPB_THEKO</name>